<protein>
    <recommendedName>
        <fullName>Zinc finger protein 585A</fullName>
    </recommendedName>
</protein>
<name>Z585A_HUMAN</name>
<feature type="chain" id="PRO_0000047677" description="Zinc finger protein 585A">
    <location>
        <begin position="1"/>
        <end position="769"/>
    </location>
</feature>
<feature type="domain" description="KRAB" evidence="2">
    <location>
        <begin position="27"/>
        <end position="97"/>
    </location>
</feature>
<feature type="zinc finger region" description="C2H2-type 1" evidence="1">
    <location>
        <begin position="158"/>
        <end position="180"/>
    </location>
</feature>
<feature type="zinc finger region" description="C2H2-type 2" evidence="1">
    <location>
        <begin position="186"/>
        <end position="208"/>
    </location>
</feature>
<feature type="zinc finger region" description="C2H2-type 3" evidence="1">
    <location>
        <begin position="214"/>
        <end position="236"/>
    </location>
</feature>
<feature type="zinc finger region" description="C2H2-type 4" evidence="1">
    <location>
        <begin position="242"/>
        <end position="264"/>
    </location>
</feature>
<feature type="zinc finger region" description="C2H2-type 5" evidence="1">
    <location>
        <begin position="270"/>
        <end position="292"/>
    </location>
</feature>
<feature type="zinc finger region" description="C2H2-type 6" evidence="1">
    <location>
        <begin position="298"/>
        <end position="320"/>
    </location>
</feature>
<feature type="zinc finger region" description="C2H2-type 7; degenerate" evidence="1">
    <location>
        <begin position="326"/>
        <end position="348"/>
    </location>
</feature>
<feature type="zinc finger region" description="C2H2-type 8" evidence="1">
    <location>
        <begin position="354"/>
        <end position="376"/>
    </location>
</feature>
<feature type="zinc finger region" description="C2H2-type 9" evidence="1">
    <location>
        <begin position="382"/>
        <end position="404"/>
    </location>
</feature>
<feature type="zinc finger region" description="C2H2-type 10" evidence="1">
    <location>
        <begin position="410"/>
        <end position="432"/>
    </location>
</feature>
<feature type="zinc finger region" description="C2H2-type 11" evidence="1">
    <location>
        <begin position="438"/>
        <end position="460"/>
    </location>
</feature>
<feature type="zinc finger region" description="C2H2-type 12" evidence="1">
    <location>
        <begin position="466"/>
        <end position="488"/>
    </location>
</feature>
<feature type="zinc finger region" description="C2H2-type 13" evidence="1">
    <location>
        <begin position="494"/>
        <end position="516"/>
    </location>
</feature>
<feature type="zinc finger region" description="C2H2-type 14" evidence="1">
    <location>
        <begin position="522"/>
        <end position="544"/>
    </location>
</feature>
<feature type="zinc finger region" description="C2H2-type 15" evidence="1">
    <location>
        <begin position="550"/>
        <end position="572"/>
    </location>
</feature>
<feature type="zinc finger region" description="C2H2-type 16" evidence="1">
    <location>
        <begin position="578"/>
        <end position="600"/>
    </location>
</feature>
<feature type="zinc finger region" description="C2H2-type 17" evidence="1">
    <location>
        <begin position="606"/>
        <end position="628"/>
    </location>
</feature>
<feature type="zinc finger region" description="C2H2-type 18" evidence="1">
    <location>
        <begin position="634"/>
        <end position="656"/>
    </location>
</feature>
<feature type="zinc finger region" description="C2H2-type 19" evidence="1">
    <location>
        <begin position="662"/>
        <end position="684"/>
    </location>
</feature>
<feature type="zinc finger region" description="C2H2-type 20" evidence="1">
    <location>
        <begin position="690"/>
        <end position="712"/>
    </location>
</feature>
<feature type="zinc finger region" description="C2H2-type 21" evidence="1">
    <location>
        <begin position="718"/>
        <end position="740"/>
    </location>
</feature>
<feature type="zinc finger region" description="C2H2-type 22" evidence="1">
    <location>
        <begin position="746"/>
        <end position="768"/>
    </location>
</feature>
<feature type="region of interest" description="Disordered" evidence="3">
    <location>
        <begin position="1"/>
        <end position="24"/>
    </location>
</feature>
<feature type="compositionally biased region" description="Polar residues" evidence="3">
    <location>
        <begin position="1"/>
        <end position="12"/>
    </location>
</feature>
<feature type="splice variant" id="VSP_016017" description="In isoform 2." evidence="4">
    <location>
        <begin position="1"/>
        <end position="55"/>
    </location>
</feature>
<feature type="splice variant" id="VSP_016018" description="In isoform 2." evidence="4">
    <location>
        <begin position="367"/>
        <end position="674"/>
    </location>
</feature>
<feature type="sequence conflict" description="In Ref. 3; AAH63820." evidence="5" ref="3">
    <original>V</original>
    <variation>I</variation>
    <location>
        <position position="763"/>
    </location>
</feature>
<accession>Q6P3V2</accession>
<accession>Q8TE95</accession>
<accession>Q96MV3</accession>
<keyword id="KW-0025">Alternative splicing</keyword>
<keyword id="KW-0479">Metal-binding</keyword>
<keyword id="KW-0539">Nucleus</keyword>
<keyword id="KW-1267">Proteomics identification</keyword>
<keyword id="KW-1185">Reference proteome</keyword>
<keyword id="KW-0677">Repeat</keyword>
<keyword id="KW-0804">Transcription</keyword>
<keyword id="KW-0805">Transcription regulation</keyword>
<keyword id="KW-0862">Zinc</keyword>
<keyword id="KW-0863">Zinc-finger</keyword>
<dbReference type="EMBL" id="AK056389">
    <property type="protein sequence ID" value="BAB71174.1"/>
    <property type="molecule type" value="mRNA"/>
</dbReference>
<dbReference type="EMBL" id="AK074345">
    <property type="protein sequence ID" value="BAB85057.1"/>
    <property type="status" value="ALT_INIT"/>
    <property type="molecule type" value="mRNA"/>
</dbReference>
<dbReference type="EMBL" id="AC012309">
    <property type="status" value="NOT_ANNOTATED_CDS"/>
    <property type="molecule type" value="Genomic_DNA"/>
</dbReference>
<dbReference type="EMBL" id="BC063820">
    <property type="protein sequence ID" value="AAH63820.1"/>
    <property type="molecule type" value="mRNA"/>
</dbReference>
<dbReference type="CCDS" id="CCDS74353.1">
    <molecule id="Q6P3V2-1"/>
</dbReference>
<dbReference type="RefSeq" id="NP_001275729.1">
    <molecule id="Q6P3V2-1"/>
    <property type="nucleotide sequence ID" value="NM_001288800.2"/>
</dbReference>
<dbReference type="RefSeq" id="NP_689868.1">
    <property type="nucleotide sequence ID" value="NM_152655.3"/>
</dbReference>
<dbReference type="RefSeq" id="NP_954577.1">
    <property type="nucleotide sequence ID" value="NM_199126.2"/>
</dbReference>
<dbReference type="SMR" id="Q6P3V2"/>
<dbReference type="BioGRID" id="128264">
    <property type="interactions" value="4"/>
</dbReference>
<dbReference type="FunCoup" id="Q6P3V2">
    <property type="interactions" value="102"/>
</dbReference>
<dbReference type="IntAct" id="Q6P3V2">
    <property type="interactions" value="2"/>
</dbReference>
<dbReference type="STRING" id="9606.ENSP00000292841"/>
<dbReference type="iPTMnet" id="Q6P3V2"/>
<dbReference type="PhosphoSitePlus" id="Q6P3V2"/>
<dbReference type="BioMuta" id="ZNF585A"/>
<dbReference type="DMDM" id="116242848"/>
<dbReference type="jPOST" id="Q6P3V2"/>
<dbReference type="MassIVE" id="Q6P3V2"/>
<dbReference type="PaxDb" id="9606-ENSP00000292841"/>
<dbReference type="PeptideAtlas" id="Q6P3V2"/>
<dbReference type="ProteomicsDB" id="66932">
    <molecule id="Q6P3V2-1"/>
</dbReference>
<dbReference type="ProteomicsDB" id="66933">
    <molecule id="Q6P3V2-2"/>
</dbReference>
<dbReference type="Antibodypedia" id="73626">
    <property type="antibodies" value="11 antibodies from 9 providers"/>
</dbReference>
<dbReference type="DNASU" id="199704"/>
<dbReference type="Ensembl" id="ENST00000292841.10">
    <molecule id="Q6P3V2-1"/>
    <property type="protein sequence ID" value="ENSP00000292841.7"/>
    <property type="gene ID" value="ENSG00000196967.11"/>
</dbReference>
<dbReference type="GeneID" id="199704"/>
<dbReference type="KEGG" id="hsa:199704"/>
<dbReference type="MANE-Select" id="ENST00000292841.10">
    <property type="protein sequence ID" value="ENSP00000292841.7"/>
    <property type="RefSeq nucleotide sequence ID" value="NM_001288800.2"/>
    <property type="RefSeq protein sequence ID" value="NP_001275729.1"/>
</dbReference>
<dbReference type="UCSC" id="uc002ofm.3">
    <molecule id="Q6P3V2-1"/>
    <property type="organism name" value="human"/>
</dbReference>
<dbReference type="AGR" id="HGNC:26305"/>
<dbReference type="CTD" id="199704"/>
<dbReference type="DisGeNET" id="199704"/>
<dbReference type="GeneCards" id="ZNF585A"/>
<dbReference type="HGNC" id="HGNC:26305">
    <property type="gene designation" value="ZNF585A"/>
</dbReference>
<dbReference type="HPA" id="ENSG00000196967">
    <property type="expression patterns" value="Low tissue specificity"/>
</dbReference>
<dbReference type="neXtProt" id="NX_Q6P3V2"/>
<dbReference type="OpenTargets" id="ENSG00000196967"/>
<dbReference type="PharmGKB" id="PA134905518"/>
<dbReference type="VEuPathDB" id="HostDB:ENSG00000196967"/>
<dbReference type="eggNOG" id="KOG1721">
    <property type="taxonomic scope" value="Eukaryota"/>
</dbReference>
<dbReference type="GeneTree" id="ENSGT00940000161781"/>
<dbReference type="HOGENOM" id="CLU_002678_44_5_1"/>
<dbReference type="InParanoid" id="Q6P3V2"/>
<dbReference type="OMA" id="TEVLHTC"/>
<dbReference type="OrthoDB" id="654211at2759"/>
<dbReference type="PAN-GO" id="Q6P3V2">
    <property type="GO annotations" value="4 GO annotations based on evolutionary models"/>
</dbReference>
<dbReference type="PhylomeDB" id="Q6P3V2"/>
<dbReference type="TreeFam" id="TF343410"/>
<dbReference type="PathwayCommons" id="Q6P3V2"/>
<dbReference type="Reactome" id="R-HSA-212436">
    <property type="pathway name" value="Generic Transcription Pathway"/>
</dbReference>
<dbReference type="SignaLink" id="Q6P3V2"/>
<dbReference type="BioGRID-ORCS" id="199704">
    <property type="hits" value="8 hits in 1140 CRISPR screens"/>
</dbReference>
<dbReference type="ChiTaRS" id="ZNF585A">
    <property type="organism name" value="human"/>
</dbReference>
<dbReference type="GenomeRNAi" id="199704"/>
<dbReference type="Pharos" id="Q6P3V2">
    <property type="development level" value="Tdark"/>
</dbReference>
<dbReference type="PRO" id="PR:Q6P3V2"/>
<dbReference type="Proteomes" id="UP000005640">
    <property type="component" value="Chromosome 19"/>
</dbReference>
<dbReference type="RNAct" id="Q6P3V2">
    <property type="molecule type" value="protein"/>
</dbReference>
<dbReference type="Bgee" id="ENSG00000196967">
    <property type="expression patterns" value="Expressed in buccal mucosa cell and 162 other cell types or tissues"/>
</dbReference>
<dbReference type="ExpressionAtlas" id="Q6P3V2">
    <property type="expression patterns" value="baseline and differential"/>
</dbReference>
<dbReference type="GO" id="GO:0005634">
    <property type="term" value="C:nucleus"/>
    <property type="evidence" value="ECO:0000318"/>
    <property type="project" value="GO_Central"/>
</dbReference>
<dbReference type="GO" id="GO:0008270">
    <property type="term" value="F:zinc ion binding"/>
    <property type="evidence" value="ECO:0007669"/>
    <property type="project" value="UniProtKB-KW"/>
</dbReference>
<dbReference type="GO" id="GO:0006357">
    <property type="term" value="P:regulation of transcription by RNA polymerase II"/>
    <property type="evidence" value="ECO:0000318"/>
    <property type="project" value="GO_Central"/>
</dbReference>
<dbReference type="CDD" id="cd07765">
    <property type="entry name" value="KRAB_A-box"/>
    <property type="match status" value="1"/>
</dbReference>
<dbReference type="FunFam" id="3.30.160.60:FF:000478">
    <property type="entry name" value="Zinc finger protein 133"/>
    <property type="match status" value="1"/>
</dbReference>
<dbReference type="FunFam" id="3.30.160.60:FF:000295">
    <property type="entry name" value="zinc finger protein 19"/>
    <property type="match status" value="3"/>
</dbReference>
<dbReference type="FunFam" id="3.30.160.60:FF:000622">
    <property type="entry name" value="zinc finger protein 26 isoform X3"/>
    <property type="match status" value="1"/>
</dbReference>
<dbReference type="FunFam" id="3.30.160.60:FF:002343">
    <property type="entry name" value="Zinc finger protein 33A"/>
    <property type="match status" value="1"/>
</dbReference>
<dbReference type="FunFam" id="3.30.160.60:FF:000016">
    <property type="entry name" value="zinc finger protein 37 homolog"/>
    <property type="match status" value="1"/>
</dbReference>
<dbReference type="FunFam" id="3.30.160.60:FF:002090">
    <property type="entry name" value="Zinc finger protein 473"/>
    <property type="match status" value="1"/>
</dbReference>
<dbReference type="FunFam" id="3.30.160.60:FF:000268">
    <property type="entry name" value="zinc finger protein 484 isoform X2"/>
    <property type="match status" value="3"/>
</dbReference>
<dbReference type="FunFam" id="3.30.160.60:FF:002254">
    <property type="entry name" value="Zinc finger protein 540"/>
    <property type="match status" value="1"/>
</dbReference>
<dbReference type="FunFam" id="3.30.160.60:FF:001270">
    <property type="entry name" value="zinc finger protein 583 isoform X1"/>
    <property type="match status" value="1"/>
</dbReference>
<dbReference type="FunFam" id="3.30.160.60:FF:000754">
    <property type="entry name" value="Zinc finger protein 585A"/>
    <property type="match status" value="4"/>
</dbReference>
<dbReference type="FunFam" id="3.30.160.60:FF:001361">
    <property type="entry name" value="Zinc finger protein 585A"/>
    <property type="match status" value="1"/>
</dbReference>
<dbReference type="FunFam" id="3.30.160.60:FF:001377">
    <property type="entry name" value="Zinc finger protein 585A"/>
    <property type="match status" value="1"/>
</dbReference>
<dbReference type="FunFam" id="3.30.160.60:FF:001396">
    <property type="entry name" value="Zinc finger protein 585A"/>
    <property type="match status" value="1"/>
</dbReference>
<dbReference type="FunFam" id="3.30.160.60:FF:001475">
    <property type="entry name" value="Zinc finger protein 585A"/>
    <property type="match status" value="1"/>
</dbReference>
<dbReference type="FunFam" id="3.30.160.60:FF:002931">
    <property type="entry name" value="zinc finger protein 585A-like"/>
    <property type="match status" value="1"/>
</dbReference>
<dbReference type="Gene3D" id="6.10.140.140">
    <property type="match status" value="1"/>
</dbReference>
<dbReference type="Gene3D" id="3.30.160.60">
    <property type="entry name" value="Classic Zinc Finger"/>
    <property type="match status" value="23"/>
</dbReference>
<dbReference type="InterPro" id="IPR001909">
    <property type="entry name" value="KRAB"/>
</dbReference>
<dbReference type="InterPro" id="IPR036051">
    <property type="entry name" value="KRAB_dom_sf"/>
</dbReference>
<dbReference type="InterPro" id="IPR036236">
    <property type="entry name" value="Znf_C2H2_sf"/>
</dbReference>
<dbReference type="InterPro" id="IPR013087">
    <property type="entry name" value="Znf_C2H2_type"/>
</dbReference>
<dbReference type="PANTHER" id="PTHR24408:SF65">
    <property type="entry name" value="C2H2-TYPE DOMAIN-CONTAINING PROTEIN"/>
    <property type="match status" value="1"/>
</dbReference>
<dbReference type="PANTHER" id="PTHR24408">
    <property type="entry name" value="ZINC FINGER PROTEIN"/>
    <property type="match status" value="1"/>
</dbReference>
<dbReference type="Pfam" id="PF01352">
    <property type="entry name" value="KRAB"/>
    <property type="match status" value="1"/>
</dbReference>
<dbReference type="Pfam" id="PF00096">
    <property type="entry name" value="zf-C2H2"/>
    <property type="match status" value="21"/>
</dbReference>
<dbReference type="SMART" id="SM00349">
    <property type="entry name" value="KRAB"/>
    <property type="match status" value="1"/>
</dbReference>
<dbReference type="SMART" id="SM00355">
    <property type="entry name" value="ZnF_C2H2"/>
    <property type="match status" value="21"/>
</dbReference>
<dbReference type="SUPFAM" id="SSF57667">
    <property type="entry name" value="beta-beta-alpha zinc fingers"/>
    <property type="match status" value="13"/>
</dbReference>
<dbReference type="SUPFAM" id="SSF109640">
    <property type="entry name" value="KRAB domain (Kruppel-associated box)"/>
    <property type="match status" value="1"/>
</dbReference>
<dbReference type="PROSITE" id="PS50805">
    <property type="entry name" value="KRAB"/>
    <property type="match status" value="1"/>
</dbReference>
<dbReference type="PROSITE" id="PS00028">
    <property type="entry name" value="ZINC_FINGER_C2H2_1"/>
    <property type="match status" value="21"/>
</dbReference>
<dbReference type="PROSITE" id="PS50157">
    <property type="entry name" value="ZINC_FINGER_C2H2_2"/>
    <property type="match status" value="23"/>
</dbReference>
<evidence type="ECO:0000255" key="1">
    <source>
        <dbReference type="PROSITE-ProRule" id="PRU00042"/>
    </source>
</evidence>
<evidence type="ECO:0000255" key="2">
    <source>
        <dbReference type="PROSITE-ProRule" id="PRU00119"/>
    </source>
</evidence>
<evidence type="ECO:0000256" key="3">
    <source>
        <dbReference type="SAM" id="MobiDB-lite"/>
    </source>
</evidence>
<evidence type="ECO:0000303" key="4">
    <source>
    </source>
</evidence>
<evidence type="ECO:0000305" key="5"/>
<comment type="function">
    <text>May be involved in transcriptional regulation.</text>
</comment>
<comment type="subcellular location">
    <subcellularLocation>
        <location evidence="5">Nucleus</location>
    </subcellularLocation>
</comment>
<comment type="alternative products">
    <event type="alternative splicing"/>
    <isoform>
        <id>Q6P3V2-1</id>
        <name>1</name>
        <sequence type="displayed"/>
    </isoform>
    <isoform>
        <id>Q6P3V2-2</id>
        <name>2</name>
        <sequence type="described" ref="VSP_016017 VSP_016018"/>
    </isoform>
</comment>
<comment type="similarity">
    <text evidence="5">Belongs to the krueppel C2H2-type zinc-finger protein family.</text>
</comment>
<comment type="sequence caution" evidence="5">
    <conflict type="erroneous initiation">
        <sequence resource="EMBL-CDS" id="BAB85057"/>
    </conflict>
</comment>
<proteinExistence type="evidence at protein level"/>
<sequence>MPANWTSPQKSSALAPEDHGSSYEGSVSFRDVAIDFSREEWRHLDPSQRNLYRDVMLETYSHLLSVGYQVPEAEVVMLEQGKEPWALQGERPRQSCPGEKLWDHNQCRKILSYKQVSSQPQKMYPGEKAYECAKFEKIFTQKSQLKVHLKVLAGEKLYVCIECGKAFVQKPEFIIHQKTHMREKPFKCNECGKSFFQVSSLFRHQRIHTGEKLYECSQCGKGFSYNSDLSIHEKIHTGERHHECTDCGKAFTQKSTLKMHQKIHTGERSYICIECGQAFIQKTHLIAHRRIHTGEKPYECSNCGKSFISKSQLQVHQRVHTRVKPYICTEYGKVFSNNSNLVTHKKVQSREKSSICTECGKAFTYRSELIIHQRIHTGEKPYECSDCGKAFTQKSALTVHQRIHTGEKSYICMKCGLAFIQKAHLIAHQIIHTGEKPHKCGHCGKLFTSKSQLHVHKRIHTGEKPYMCNKCGKAFTNRSNLITHQKTHTGEKSYICSKCGKAFTQRSDLITHQRIHTGEKPYECNTCGKAFTQKSHLNIHQKIHTGERQYECHECGKAFNQKSILIVHQKIHTGEKPYVCTECGRAFIRKSNFITHQRIHTGEKPYECSDCGKSFTSKSQLLVHQPVHTGEKPYVCAECGKAFSGRSNLSKHQKTHTGEKPYICSECGKTFRQKSELITHHRIHTGEKPYECSDCGKSFTKKSQLQVHQRIHTGEKPYVCAECGKAFTDRSNLNKHQTTHTGDKPYKCGICGKGFVQKSVFSVHQSSHA</sequence>
<gene>
    <name type="primary">ZNF585A</name>
</gene>
<reference key="1">
    <citation type="journal article" date="2004" name="Nat. Genet.">
        <title>Complete sequencing and characterization of 21,243 full-length human cDNAs.</title>
        <authorList>
            <person name="Ota T."/>
            <person name="Suzuki Y."/>
            <person name="Nishikawa T."/>
            <person name="Otsuki T."/>
            <person name="Sugiyama T."/>
            <person name="Irie R."/>
            <person name="Wakamatsu A."/>
            <person name="Hayashi K."/>
            <person name="Sato H."/>
            <person name="Nagai K."/>
            <person name="Kimura K."/>
            <person name="Makita H."/>
            <person name="Sekine M."/>
            <person name="Obayashi M."/>
            <person name="Nishi T."/>
            <person name="Shibahara T."/>
            <person name="Tanaka T."/>
            <person name="Ishii S."/>
            <person name="Yamamoto J."/>
            <person name="Saito K."/>
            <person name="Kawai Y."/>
            <person name="Isono Y."/>
            <person name="Nakamura Y."/>
            <person name="Nagahari K."/>
            <person name="Murakami K."/>
            <person name="Yasuda T."/>
            <person name="Iwayanagi T."/>
            <person name="Wagatsuma M."/>
            <person name="Shiratori A."/>
            <person name="Sudo H."/>
            <person name="Hosoiri T."/>
            <person name="Kaku Y."/>
            <person name="Kodaira H."/>
            <person name="Kondo H."/>
            <person name="Sugawara M."/>
            <person name="Takahashi M."/>
            <person name="Kanda K."/>
            <person name="Yokoi T."/>
            <person name="Furuya T."/>
            <person name="Kikkawa E."/>
            <person name="Omura Y."/>
            <person name="Abe K."/>
            <person name="Kamihara K."/>
            <person name="Katsuta N."/>
            <person name="Sato K."/>
            <person name="Tanikawa M."/>
            <person name="Yamazaki M."/>
            <person name="Ninomiya K."/>
            <person name="Ishibashi T."/>
            <person name="Yamashita H."/>
            <person name="Murakawa K."/>
            <person name="Fujimori K."/>
            <person name="Tanai H."/>
            <person name="Kimata M."/>
            <person name="Watanabe M."/>
            <person name="Hiraoka S."/>
            <person name="Chiba Y."/>
            <person name="Ishida S."/>
            <person name="Ono Y."/>
            <person name="Takiguchi S."/>
            <person name="Watanabe S."/>
            <person name="Yosida M."/>
            <person name="Hotuta T."/>
            <person name="Kusano J."/>
            <person name="Kanehori K."/>
            <person name="Takahashi-Fujii A."/>
            <person name="Hara H."/>
            <person name="Tanase T.-O."/>
            <person name="Nomura Y."/>
            <person name="Togiya S."/>
            <person name="Komai F."/>
            <person name="Hara R."/>
            <person name="Takeuchi K."/>
            <person name="Arita M."/>
            <person name="Imose N."/>
            <person name="Musashino K."/>
            <person name="Yuuki H."/>
            <person name="Oshima A."/>
            <person name="Sasaki N."/>
            <person name="Aotsuka S."/>
            <person name="Yoshikawa Y."/>
            <person name="Matsunawa H."/>
            <person name="Ichihara T."/>
            <person name="Shiohata N."/>
            <person name="Sano S."/>
            <person name="Moriya S."/>
            <person name="Momiyama H."/>
            <person name="Satoh N."/>
            <person name="Takami S."/>
            <person name="Terashima Y."/>
            <person name="Suzuki O."/>
            <person name="Nakagawa S."/>
            <person name="Senoh A."/>
            <person name="Mizoguchi H."/>
            <person name="Goto Y."/>
            <person name="Shimizu F."/>
            <person name="Wakebe H."/>
            <person name="Hishigaki H."/>
            <person name="Watanabe T."/>
            <person name="Sugiyama A."/>
            <person name="Takemoto M."/>
            <person name="Kawakami B."/>
            <person name="Yamazaki M."/>
            <person name="Watanabe K."/>
            <person name="Kumagai A."/>
            <person name="Itakura S."/>
            <person name="Fukuzumi Y."/>
            <person name="Fujimori Y."/>
            <person name="Komiyama M."/>
            <person name="Tashiro H."/>
            <person name="Tanigami A."/>
            <person name="Fujiwara T."/>
            <person name="Ono T."/>
            <person name="Yamada K."/>
            <person name="Fujii Y."/>
            <person name="Ozaki K."/>
            <person name="Hirao M."/>
            <person name="Ohmori Y."/>
            <person name="Kawabata A."/>
            <person name="Hikiji T."/>
            <person name="Kobatake N."/>
            <person name="Inagaki H."/>
            <person name="Ikema Y."/>
            <person name="Okamoto S."/>
            <person name="Okitani R."/>
            <person name="Kawakami T."/>
            <person name="Noguchi S."/>
            <person name="Itoh T."/>
            <person name="Shigeta K."/>
            <person name="Senba T."/>
            <person name="Matsumura K."/>
            <person name="Nakajima Y."/>
            <person name="Mizuno T."/>
            <person name="Morinaga M."/>
            <person name="Sasaki M."/>
            <person name="Togashi T."/>
            <person name="Oyama M."/>
            <person name="Hata H."/>
            <person name="Watanabe M."/>
            <person name="Komatsu T."/>
            <person name="Mizushima-Sugano J."/>
            <person name="Satoh T."/>
            <person name="Shirai Y."/>
            <person name="Takahashi Y."/>
            <person name="Nakagawa K."/>
            <person name="Okumura K."/>
            <person name="Nagase T."/>
            <person name="Nomura N."/>
            <person name="Kikuchi H."/>
            <person name="Masuho Y."/>
            <person name="Yamashita R."/>
            <person name="Nakai K."/>
            <person name="Yada T."/>
            <person name="Nakamura Y."/>
            <person name="Ohara O."/>
            <person name="Isogai T."/>
            <person name="Sugano S."/>
        </authorList>
    </citation>
    <scope>NUCLEOTIDE SEQUENCE [LARGE SCALE MRNA] (ISOFORM 2)</scope>
    <scope>NUCLEOTIDE SEQUENCE [LARGE SCALE MRNA] OF 37-769 (ISOFORM 1)</scope>
</reference>
<reference key="2">
    <citation type="journal article" date="2004" name="Nature">
        <title>The DNA sequence and biology of human chromosome 19.</title>
        <authorList>
            <person name="Grimwood J."/>
            <person name="Gordon L.A."/>
            <person name="Olsen A.S."/>
            <person name="Terry A."/>
            <person name="Schmutz J."/>
            <person name="Lamerdin J.E."/>
            <person name="Hellsten U."/>
            <person name="Goodstein D."/>
            <person name="Couronne O."/>
            <person name="Tran-Gyamfi M."/>
            <person name="Aerts A."/>
            <person name="Altherr M."/>
            <person name="Ashworth L."/>
            <person name="Bajorek E."/>
            <person name="Black S."/>
            <person name="Branscomb E."/>
            <person name="Caenepeel S."/>
            <person name="Carrano A.V."/>
            <person name="Caoile C."/>
            <person name="Chan Y.M."/>
            <person name="Christensen M."/>
            <person name="Cleland C.A."/>
            <person name="Copeland A."/>
            <person name="Dalin E."/>
            <person name="Dehal P."/>
            <person name="Denys M."/>
            <person name="Detter J.C."/>
            <person name="Escobar J."/>
            <person name="Flowers D."/>
            <person name="Fotopulos D."/>
            <person name="Garcia C."/>
            <person name="Georgescu A.M."/>
            <person name="Glavina T."/>
            <person name="Gomez M."/>
            <person name="Gonzales E."/>
            <person name="Groza M."/>
            <person name="Hammon N."/>
            <person name="Hawkins T."/>
            <person name="Haydu L."/>
            <person name="Ho I."/>
            <person name="Huang W."/>
            <person name="Israni S."/>
            <person name="Jett J."/>
            <person name="Kadner K."/>
            <person name="Kimball H."/>
            <person name="Kobayashi A."/>
            <person name="Larionov V."/>
            <person name="Leem S.-H."/>
            <person name="Lopez F."/>
            <person name="Lou Y."/>
            <person name="Lowry S."/>
            <person name="Malfatti S."/>
            <person name="Martinez D."/>
            <person name="McCready P.M."/>
            <person name="Medina C."/>
            <person name="Morgan J."/>
            <person name="Nelson K."/>
            <person name="Nolan M."/>
            <person name="Ovcharenko I."/>
            <person name="Pitluck S."/>
            <person name="Pollard M."/>
            <person name="Popkie A.P."/>
            <person name="Predki P."/>
            <person name="Quan G."/>
            <person name="Ramirez L."/>
            <person name="Rash S."/>
            <person name="Retterer J."/>
            <person name="Rodriguez A."/>
            <person name="Rogers S."/>
            <person name="Salamov A."/>
            <person name="Salazar A."/>
            <person name="She X."/>
            <person name="Smith D."/>
            <person name="Slezak T."/>
            <person name="Solovyev V."/>
            <person name="Thayer N."/>
            <person name="Tice H."/>
            <person name="Tsai M."/>
            <person name="Ustaszewska A."/>
            <person name="Vo N."/>
            <person name="Wagner M."/>
            <person name="Wheeler J."/>
            <person name="Wu K."/>
            <person name="Xie G."/>
            <person name="Yang J."/>
            <person name="Dubchak I."/>
            <person name="Furey T.S."/>
            <person name="DeJong P."/>
            <person name="Dickson M."/>
            <person name="Gordon D."/>
            <person name="Eichler E.E."/>
            <person name="Pennacchio L.A."/>
            <person name="Richardson P."/>
            <person name="Stubbs L."/>
            <person name="Rokhsar D.S."/>
            <person name="Myers R.M."/>
            <person name="Rubin E.M."/>
            <person name="Lucas S.M."/>
        </authorList>
    </citation>
    <scope>NUCLEOTIDE SEQUENCE [LARGE SCALE GENOMIC DNA]</scope>
</reference>
<reference key="3">
    <citation type="journal article" date="2004" name="Genome Res.">
        <title>The status, quality, and expansion of the NIH full-length cDNA project: the Mammalian Gene Collection (MGC).</title>
        <authorList>
            <consortium name="The MGC Project Team"/>
        </authorList>
    </citation>
    <scope>NUCLEOTIDE SEQUENCE [LARGE SCALE MRNA] (ISOFORM 1)</scope>
    <source>
        <tissue>Uterus</tissue>
    </source>
</reference>
<organism>
    <name type="scientific">Homo sapiens</name>
    <name type="common">Human</name>
    <dbReference type="NCBI Taxonomy" id="9606"/>
    <lineage>
        <taxon>Eukaryota</taxon>
        <taxon>Metazoa</taxon>
        <taxon>Chordata</taxon>
        <taxon>Craniata</taxon>
        <taxon>Vertebrata</taxon>
        <taxon>Euteleostomi</taxon>
        <taxon>Mammalia</taxon>
        <taxon>Eutheria</taxon>
        <taxon>Euarchontoglires</taxon>
        <taxon>Primates</taxon>
        <taxon>Haplorrhini</taxon>
        <taxon>Catarrhini</taxon>
        <taxon>Hominidae</taxon>
        <taxon>Homo</taxon>
    </lineage>
</organism>